<comment type="function">
    <text evidence="1">Catalyzes the NAD(+)-dependent oxidation of L-threonine to 2-amino-3-ketobutyrate.</text>
</comment>
<comment type="catalytic activity">
    <reaction evidence="1">
        <text>L-threonine + NAD(+) = (2S)-2-amino-3-oxobutanoate + NADH + H(+)</text>
        <dbReference type="Rhea" id="RHEA:13161"/>
        <dbReference type="ChEBI" id="CHEBI:15378"/>
        <dbReference type="ChEBI" id="CHEBI:57540"/>
        <dbReference type="ChEBI" id="CHEBI:57926"/>
        <dbReference type="ChEBI" id="CHEBI:57945"/>
        <dbReference type="ChEBI" id="CHEBI:78948"/>
        <dbReference type="EC" id="1.1.1.103"/>
    </reaction>
</comment>
<comment type="cofactor">
    <cofactor evidence="1">
        <name>Zn(2+)</name>
        <dbReference type="ChEBI" id="CHEBI:29105"/>
    </cofactor>
    <text evidence="1">Binds 2 Zn(2+) ions per subunit.</text>
</comment>
<comment type="pathway">
    <text evidence="1">Amino-acid degradation; L-threonine degradation via oxydo-reductase pathway; glycine from L-threonine: step 1/2.</text>
</comment>
<comment type="subunit">
    <text evidence="1">Homotetramer.</text>
</comment>
<comment type="subcellular location">
    <subcellularLocation>
        <location evidence="1">Cytoplasm</location>
    </subcellularLocation>
</comment>
<comment type="similarity">
    <text evidence="1">Belongs to the zinc-containing alcohol dehydrogenase family.</text>
</comment>
<accession>B7MFI0</accession>
<sequence>MKALSKLKAEEGIWMTDVPVPELGHNDLLIKIRKTAICGTDVHIYNWDEWSQKTIPVPMVVGHEYVGEVVGIGQEVKGFKIGDRVSGEGHITCGHCRNCRGGRTHLCRNTIGVGVNRPGCFAEYLVIPAFNAFKIPDNISDDLASIFDPFGNAVHTALSFDLVGEDVLVSGAGPIGIMAAAVAKHVGARNVVITDVNEYRLELARKMGITRAVNVAKENLNDVMTELGMTEGFDVGLEMSGAPPAFRTMLDTMNHGGRIAMLGIPPSDMSIDWTKVIFKGLFIKGIYGREMFETWYKMAALIQSGLDLSPIITHRFSIDDFQKGFDAMRSGQSGKVILSWD</sequence>
<feature type="chain" id="PRO_1000130544" description="L-threonine 3-dehydrogenase">
    <location>
        <begin position="1"/>
        <end position="341"/>
    </location>
</feature>
<feature type="active site" description="Charge relay system" evidence="1">
    <location>
        <position position="40"/>
    </location>
</feature>
<feature type="active site" description="Charge relay system" evidence="1">
    <location>
        <position position="43"/>
    </location>
</feature>
<feature type="binding site" evidence="1">
    <location>
        <position position="38"/>
    </location>
    <ligand>
        <name>Zn(2+)</name>
        <dbReference type="ChEBI" id="CHEBI:29105"/>
        <label>1</label>
        <note>catalytic</note>
    </ligand>
</feature>
<feature type="binding site" evidence="1">
    <location>
        <position position="63"/>
    </location>
    <ligand>
        <name>Zn(2+)</name>
        <dbReference type="ChEBI" id="CHEBI:29105"/>
        <label>1</label>
        <note>catalytic</note>
    </ligand>
</feature>
<feature type="binding site" evidence="1">
    <location>
        <position position="64"/>
    </location>
    <ligand>
        <name>Zn(2+)</name>
        <dbReference type="ChEBI" id="CHEBI:29105"/>
        <label>1</label>
        <note>catalytic</note>
    </ligand>
</feature>
<feature type="binding site" evidence="1">
    <location>
        <position position="93"/>
    </location>
    <ligand>
        <name>Zn(2+)</name>
        <dbReference type="ChEBI" id="CHEBI:29105"/>
        <label>2</label>
    </ligand>
</feature>
<feature type="binding site" evidence="1">
    <location>
        <position position="96"/>
    </location>
    <ligand>
        <name>Zn(2+)</name>
        <dbReference type="ChEBI" id="CHEBI:29105"/>
        <label>2</label>
    </ligand>
</feature>
<feature type="binding site" evidence="1">
    <location>
        <position position="99"/>
    </location>
    <ligand>
        <name>Zn(2+)</name>
        <dbReference type="ChEBI" id="CHEBI:29105"/>
        <label>2</label>
    </ligand>
</feature>
<feature type="binding site" evidence="1">
    <location>
        <position position="107"/>
    </location>
    <ligand>
        <name>Zn(2+)</name>
        <dbReference type="ChEBI" id="CHEBI:29105"/>
        <label>2</label>
    </ligand>
</feature>
<feature type="binding site" evidence="1">
    <location>
        <position position="175"/>
    </location>
    <ligand>
        <name>NAD(+)</name>
        <dbReference type="ChEBI" id="CHEBI:57540"/>
    </ligand>
</feature>
<feature type="binding site" evidence="1">
    <location>
        <position position="195"/>
    </location>
    <ligand>
        <name>NAD(+)</name>
        <dbReference type="ChEBI" id="CHEBI:57540"/>
    </ligand>
</feature>
<feature type="binding site" evidence="1">
    <location>
        <position position="200"/>
    </location>
    <ligand>
        <name>NAD(+)</name>
        <dbReference type="ChEBI" id="CHEBI:57540"/>
    </ligand>
</feature>
<feature type="binding site" evidence="1">
    <location>
        <begin position="262"/>
        <end position="264"/>
    </location>
    <ligand>
        <name>NAD(+)</name>
        <dbReference type="ChEBI" id="CHEBI:57540"/>
    </ligand>
</feature>
<feature type="binding site" evidence="1">
    <location>
        <begin position="286"/>
        <end position="287"/>
    </location>
    <ligand>
        <name>NAD(+)</name>
        <dbReference type="ChEBI" id="CHEBI:57540"/>
    </ligand>
</feature>
<feature type="site" description="Important for catalytic activity for the proton relay mechanism but does not participate directly in the coordination of zinc atom" evidence="1">
    <location>
        <position position="148"/>
    </location>
</feature>
<protein>
    <recommendedName>
        <fullName evidence="1">L-threonine 3-dehydrogenase</fullName>
        <shortName evidence="1">TDH</shortName>
        <ecNumber evidence="1">1.1.1.103</ecNumber>
    </recommendedName>
</protein>
<name>TDH_ECO45</name>
<gene>
    <name evidence="1" type="primary">tdh</name>
    <name type="ordered locus">ECS88_4033</name>
</gene>
<proteinExistence type="inferred from homology"/>
<evidence type="ECO:0000255" key="1">
    <source>
        <dbReference type="HAMAP-Rule" id="MF_00627"/>
    </source>
</evidence>
<reference key="1">
    <citation type="journal article" date="2009" name="PLoS Genet.">
        <title>Organised genome dynamics in the Escherichia coli species results in highly diverse adaptive paths.</title>
        <authorList>
            <person name="Touchon M."/>
            <person name="Hoede C."/>
            <person name="Tenaillon O."/>
            <person name="Barbe V."/>
            <person name="Baeriswyl S."/>
            <person name="Bidet P."/>
            <person name="Bingen E."/>
            <person name="Bonacorsi S."/>
            <person name="Bouchier C."/>
            <person name="Bouvet O."/>
            <person name="Calteau A."/>
            <person name="Chiapello H."/>
            <person name="Clermont O."/>
            <person name="Cruveiller S."/>
            <person name="Danchin A."/>
            <person name="Diard M."/>
            <person name="Dossat C."/>
            <person name="Karoui M.E."/>
            <person name="Frapy E."/>
            <person name="Garry L."/>
            <person name="Ghigo J.M."/>
            <person name="Gilles A.M."/>
            <person name="Johnson J."/>
            <person name="Le Bouguenec C."/>
            <person name="Lescat M."/>
            <person name="Mangenot S."/>
            <person name="Martinez-Jehanne V."/>
            <person name="Matic I."/>
            <person name="Nassif X."/>
            <person name="Oztas S."/>
            <person name="Petit M.A."/>
            <person name="Pichon C."/>
            <person name="Rouy Z."/>
            <person name="Ruf C.S."/>
            <person name="Schneider D."/>
            <person name="Tourret J."/>
            <person name="Vacherie B."/>
            <person name="Vallenet D."/>
            <person name="Medigue C."/>
            <person name="Rocha E.P.C."/>
            <person name="Denamur E."/>
        </authorList>
    </citation>
    <scope>NUCLEOTIDE SEQUENCE [LARGE SCALE GENOMIC DNA]</scope>
    <source>
        <strain>S88 / ExPEC</strain>
    </source>
</reference>
<keyword id="KW-0963">Cytoplasm</keyword>
<keyword id="KW-0479">Metal-binding</keyword>
<keyword id="KW-0520">NAD</keyword>
<keyword id="KW-0560">Oxidoreductase</keyword>
<keyword id="KW-1185">Reference proteome</keyword>
<keyword id="KW-0862">Zinc</keyword>
<dbReference type="EC" id="1.1.1.103" evidence="1"/>
<dbReference type="EMBL" id="CU928161">
    <property type="protein sequence ID" value="CAR05242.1"/>
    <property type="molecule type" value="Genomic_DNA"/>
</dbReference>
<dbReference type="RefSeq" id="WP_000646018.1">
    <property type="nucleotide sequence ID" value="NC_011742.1"/>
</dbReference>
<dbReference type="SMR" id="B7MFI0"/>
<dbReference type="KEGG" id="ecz:ECS88_4033"/>
<dbReference type="HOGENOM" id="CLU_026673_11_0_6"/>
<dbReference type="UniPathway" id="UPA00046">
    <property type="reaction ID" value="UER00505"/>
</dbReference>
<dbReference type="Proteomes" id="UP000000747">
    <property type="component" value="Chromosome"/>
</dbReference>
<dbReference type="GO" id="GO:0005737">
    <property type="term" value="C:cytoplasm"/>
    <property type="evidence" value="ECO:0007669"/>
    <property type="project" value="UniProtKB-SubCell"/>
</dbReference>
<dbReference type="GO" id="GO:0008743">
    <property type="term" value="F:L-threonine 3-dehydrogenase activity"/>
    <property type="evidence" value="ECO:0007669"/>
    <property type="project" value="UniProtKB-UniRule"/>
</dbReference>
<dbReference type="GO" id="GO:0008270">
    <property type="term" value="F:zinc ion binding"/>
    <property type="evidence" value="ECO:0007669"/>
    <property type="project" value="UniProtKB-UniRule"/>
</dbReference>
<dbReference type="GO" id="GO:0019518">
    <property type="term" value="P:L-threonine catabolic process to glycine"/>
    <property type="evidence" value="ECO:0007669"/>
    <property type="project" value="UniProtKB-UniPathway"/>
</dbReference>
<dbReference type="FunFam" id="3.40.50.720:FF:000059">
    <property type="entry name" value="L-threonine 3-dehydrogenase"/>
    <property type="match status" value="1"/>
</dbReference>
<dbReference type="Gene3D" id="3.90.180.10">
    <property type="entry name" value="Medium-chain alcohol dehydrogenases, catalytic domain"/>
    <property type="match status" value="1"/>
</dbReference>
<dbReference type="Gene3D" id="3.40.50.720">
    <property type="entry name" value="NAD(P)-binding Rossmann-like Domain"/>
    <property type="match status" value="1"/>
</dbReference>
<dbReference type="HAMAP" id="MF_00627">
    <property type="entry name" value="Thr_dehydrog"/>
    <property type="match status" value="1"/>
</dbReference>
<dbReference type="InterPro" id="IPR013149">
    <property type="entry name" value="ADH-like_C"/>
</dbReference>
<dbReference type="InterPro" id="IPR013154">
    <property type="entry name" value="ADH-like_N"/>
</dbReference>
<dbReference type="InterPro" id="IPR002328">
    <property type="entry name" value="ADH_Zn_CS"/>
</dbReference>
<dbReference type="InterPro" id="IPR011032">
    <property type="entry name" value="GroES-like_sf"/>
</dbReference>
<dbReference type="InterPro" id="IPR004627">
    <property type="entry name" value="L-Threonine_3-DHase"/>
</dbReference>
<dbReference type="InterPro" id="IPR036291">
    <property type="entry name" value="NAD(P)-bd_dom_sf"/>
</dbReference>
<dbReference type="InterPro" id="IPR020843">
    <property type="entry name" value="PKS_ER"/>
</dbReference>
<dbReference type="InterPro" id="IPR050129">
    <property type="entry name" value="Zn_alcohol_dh"/>
</dbReference>
<dbReference type="NCBIfam" id="NF003808">
    <property type="entry name" value="PRK05396.1"/>
    <property type="match status" value="1"/>
</dbReference>
<dbReference type="NCBIfam" id="TIGR00692">
    <property type="entry name" value="tdh"/>
    <property type="match status" value="1"/>
</dbReference>
<dbReference type="PANTHER" id="PTHR43401">
    <property type="entry name" value="L-THREONINE 3-DEHYDROGENASE"/>
    <property type="match status" value="1"/>
</dbReference>
<dbReference type="PANTHER" id="PTHR43401:SF2">
    <property type="entry name" value="L-THREONINE 3-DEHYDROGENASE"/>
    <property type="match status" value="1"/>
</dbReference>
<dbReference type="Pfam" id="PF08240">
    <property type="entry name" value="ADH_N"/>
    <property type="match status" value="1"/>
</dbReference>
<dbReference type="Pfam" id="PF00107">
    <property type="entry name" value="ADH_zinc_N"/>
    <property type="match status" value="1"/>
</dbReference>
<dbReference type="SMART" id="SM00829">
    <property type="entry name" value="PKS_ER"/>
    <property type="match status" value="1"/>
</dbReference>
<dbReference type="SUPFAM" id="SSF50129">
    <property type="entry name" value="GroES-like"/>
    <property type="match status" value="1"/>
</dbReference>
<dbReference type="SUPFAM" id="SSF51735">
    <property type="entry name" value="NAD(P)-binding Rossmann-fold domains"/>
    <property type="match status" value="1"/>
</dbReference>
<dbReference type="PROSITE" id="PS00059">
    <property type="entry name" value="ADH_ZINC"/>
    <property type="match status" value="1"/>
</dbReference>
<organism>
    <name type="scientific">Escherichia coli O45:K1 (strain S88 / ExPEC)</name>
    <dbReference type="NCBI Taxonomy" id="585035"/>
    <lineage>
        <taxon>Bacteria</taxon>
        <taxon>Pseudomonadati</taxon>
        <taxon>Pseudomonadota</taxon>
        <taxon>Gammaproteobacteria</taxon>
        <taxon>Enterobacterales</taxon>
        <taxon>Enterobacteriaceae</taxon>
        <taxon>Escherichia</taxon>
    </lineage>
</organism>